<dbReference type="SMR" id="A0A0D2YFZ9"/>
<dbReference type="EnsemblFungi" id="FOXG_15237T0">
    <property type="protein sequence ID" value="FOXG_15237P0"/>
    <property type="gene ID" value="FOXG_15237"/>
</dbReference>
<dbReference type="OMA" id="PHEARIC"/>
<dbReference type="GO" id="GO:0005634">
    <property type="term" value="C:nucleus"/>
    <property type="evidence" value="ECO:0007669"/>
    <property type="project" value="UniProtKB-SubCell"/>
</dbReference>
<dbReference type="GO" id="GO:0000981">
    <property type="term" value="F:DNA-binding transcription factor activity, RNA polymerase II-specific"/>
    <property type="evidence" value="ECO:0007669"/>
    <property type="project" value="InterPro"/>
</dbReference>
<dbReference type="GO" id="GO:0008270">
    <property type="term" value="F:zinc ion binding"/>
    <property type="evidence" value="ECO:0007669"/>
    <property type="project" value="InterPro"/>
</dbReference>
<dbReference type="GO" id="GO:0001080">
    <property type="term" value="P:nitrogen catabolite activation of transcription from RNA polymerase II promoter"/>
    <property type="evidence" value="ECO:0007669"/>
    <property type="project" value="TreeGrafter"/>
</dbReference>
<dbReference type="CDD" id="cd00067">
    <property type="entry name" value="GAL4"/>
    <property type="match status" value="1"/>
</dbReference>
<dbReference type="Gene3D" id="4.10.240.10">
    <property type="entry name" value="Zn(2)-C6 fungal-type DNA-binding domain"/>
    <property type="match status" value="1"/>
</dbReference>
<dbReference type="InterPro" id="IPR050797">
    <property type="entry name" value="Carb_Metab_Trans_Reg"/>
</dbReference>
<dbReference type="InterPro" id="IPR036864">
    <property type="entry name" value="Zn2-C6_fun-type_DNA-bd_sf"/>
</dbReference>
<dbReference type="InterPro" id="IPR001138">
    <property type="entry name" value="Zn2Cys6_DnaBD"/>
</dbReference>
<dbReference type="PANTHER" id="PTHR31668">
    <property type="entry name" value="GLUCOSE TRANSPORT TRANSCRIPTION REGULATOR RGT1-RELATED-RELATED"/>
    <property type="match status" value="1"/>
</dbReference>
<dbReference type="PANTHER" id="PTHR31668:SF4">
    <property type="entry name" value="TRANSCRIPTIONAL ACTIVATOR PROTEIN DAL81"/>
    <property type="match status" value="1"/>
</dbReference>
<dbReference type="Pfam" id="PF00172">
    <property type="entry name" value="Zn_clus"/>
    <property type="match status" value="1"/>
</dbReference>
<dbReference type="SUPFAM" id="SSF57701">
    <property type="entry name" value="Zn2/Cys6 DNA-binding domain"/>
    <property type="match status" value="1"/>
</dbReference>
<dbReference type="PROSITE" id="PS00463">
    <property type="entry name" value="ZN2_CY6_FUNGAL_1"/>
    <property type="match status" value="1"/>
</dbReference>
<dbReference type="PROSITE" id="PS50048">
    <property type="entry name" value="ZN2_CY6_FUNGAL_2"/>
    <property type="match status" value="1"/>
</dbReference>
<comment type="function">
    <text evidence="12">Transcription factor that regulates the expression of the gene cluster that mediates the biosynthesis of fusaric acid, a mycotoxin with low to moderate toxicity to animals and humans, but with high phytotoxic properties (PubMed:25372119).</text>
</comment>
<comment type="subcellular location">
    <subcellularLocation>
        <location evidence="1">Nucleus</location>
    </subcellularLocation>
</comment>
<comment type="disruption phenotype">
    <text evidence="10">Impairs the production of fusaric acid (PubMed:25372119).</text>
</comment>
<comment type="biotechnology">
    <text evidence="3 4 5 6 7 8 9">Fusaric acid is phytotoxic to plants such as cotton and banana (PubMed:20955724, PubMed:23922960). It has been shown to induce programmed cell death in plants (PubMed:16868776, PubMed:23838885). In addition to a mild toxicity to animals, fusaric acid exhibits acanthamoebicidal, antioomycete, and antimycobacterial activities (PubMed:17927749, PubMed:21811925, PubMed:22864988).</text>
</comment>
<name>FUB10_FUSO4</name>
<proteinExistence type="evidence at protein level"/>
<feature type="chain" id="PRO_0000437329" description="Fusaric acid cluster transcription factor FUB10">
    <location>
        <begin position="1"/>
        <end position="416"/>
    </location>
</feature>
<feature type="DNA-binding region" description="Zn(2)-C6 fungal-type" evidence="1">
    <location>
        <begin position="16"/>
        <end position="47"/>
    </location>
</feature>
<feature type="region of interest" description="Disordered" evidence="2">
    <location>
        <begin position="50"/>
        <end position="92"/>
    </location>
</feature>
<feature type="compositionally biased region" description="Polar residues" evidence="2">
    <location>
        <begin position="61"/>
        <end position="73"/>
    </location>
</feature>
<feature type="compositionally biased region" description="Low complexity" evidence="2">
    <location>
        <begin position="74"/>
        <end position="86"/>
    </location>
</feature>
<reference key="1">
    <citation type="journal article" date="2010" name="Nature">
        <title>Comparative genomics reveals mobile pathogenicity chromosomes in Fusarium.</title>
        <authorList>
            <person name="Ma L.-J."/>
            <person name="van der Does H.C."/>
            <person name="Borkovich K.A."/>
            <person name="Coleman J.J."/>
            <person name="Daboussi M.-J."/>
            <person name="Di Pietro A."/>
            <person name="Dufresne M."/>
            <person name="Freitag M."/>
            <person name="Grabherr M."/>
            <person name="Henrissat B."/>
            <person name="Houterman P.M."/>
            <person name="Kang S."/>
            <person name="Shim W.-B."/>
            <person name="Woloshuk C."/>
            <person name="Xie X."/>
            <person name="Xu J.-R."/>
            <person name="Antoniw J."/>
            <person name="Baker S.E."/>
            <person name="Bluhm B.H."/>
            <person name="Breakspear A."/>
            <person name="Brown D.W."/>
            <person name="Butchko R.A.E."/>
            <person name="Chapman S."/>
            <person name="Coulson R."/>
            <person name="Coutinho P.M."/>
            <person name="Danchin E.G.J."/>
            <person name="Diener A."/>
            <person name="Gale L.R."/>
            <person name="Gardiner D.M."/>
            <person name="Goff S."/>
            <person name="Hammond-Kosack K.E."/>
            <person name="Hilburn K."/>
            <person name="Hua-Van A."/>
            <person name="Jonkers W."/>
            <person name="Kazan K."/>
            <person name="Kodira C.D."/>
            <person name="Koehrsen M."/>
            <person name="Kumar L."/>
            <person name="Lee Y.-H."/>
            <person name="Li L."/>
            <person name="Manners J.M."/>
            <person name="Miranda-Saavedra D."/>
            <person name="Mukherjee M."/>
            <person name="Park G."/>
            <person name="Park J."/>
            <person name="Park S.-Y."/>
            <person name="Proctor R.H."/>
            <person name="Regev A."/>
            <person name="Ruiz-Roldan M.C."/>
            <person name="Sain D."/>
            <person name="Sakthikumar S."/>
            <person name="Sykes S."/>
            <person name="Schwartz D.C."/>
            <person name="Turgeon B.G."/>
            <person name="Wapinski I."/>
            <person name="Yoder O."/>
            <person name="Young S."/>
            <person name="Zeng Q."/>
            <person name="Zhou S."/>
            <person name="Galagan J."/>
            <person name="Cuomo C.A."/>
            <person name="Kistler H.C."/>
            <person name="Rep M."/>
        </authorList>
    </citation>
    <scope>NUCLEOTIDE SEQUENCE [LARGE SCALE GENOMIC DNA]</scope>
    <source>
        <strain>4287 / CBS 123668 / FGSC 9935 / NRRL 34936</strain>
    </source>
</reference>
<reference key="2">
    <citation type="submission" date="2015-03" db="UniProtKB">
        <authorList>
            <consortium name="EnsemblFungi"/>
        </authorList>
    </citation>
    <scope>IDENTIFICATION</scope>
    <source>
        <strain>4287 / CBS 123668 / FGSC 9935 / NRRL 34936</strain>
    </source>
</reference>
<reference key="3">
    <citation type="journal article" date="2006" name="Planta">
        <title>Fusaric acid induces apoptosis in saffron root-tip cells: roles of caspase-like activity, cytochrome c, and H2O2.</title>
        <authorList>
            <person name="Samadi L."/>
            <person name="Shahsavan Behboodi B."/>
        </authorList>
    </citation>
    <scope>BIOTECHNOLOGY</scope>
</reference>
<reference key="4">
    <citation type="journal article" date="2008" name="J. Appl. Microbiol.">
        <title>Bikaverin and fusaric acid from Fusarium oxysporum show antioomycete activity against Phytophthora infestans.</title>
        <authorList>
            <person name="Son S.W."/>
            <person name="Kim H.Y."/>
            <person name="Choi G.J."/>
            <person name="Lim H.K."/>
            <person name="Jang K.S."/>
            <person name="Lee S.O."/>
            <person name="Lee S."/>
            <person name="Sung N.D."/>
            <person name="Kim J.C."/>
        </authorList>
    </citation>
    <scope>BIOTECHNOLOGY</scope>
</reference>
<reference key="5">
    <citation type="journal article" date="2011" name="Arch. Pharm. Res.">
        <title>Antimycobacterial activity of fusaric acid from a mangrove endophyte and its metal complexes.</title>
        <authorList>
            <person name="Pan J.H."/>
            <person name="Chen Y."/>
            <person name="Huang Y.H."/>
            <person name="Tao Y.W."/>
            <person name="Wang J."/>
            <person name="Li Y."/>
            <person name="Peng Y."/>
            <person name="Dong T."/>
            <person name="Lai X.M."/>
            <person name="Lin Y.C."/>
        </authorList>
    </citation>
    <scope>BIOTECHNOLOGY</scope>
</reference>
<reference key="6">
    <citation type="journal article" date="2011" name="Toxicon">
        <title>Phytotoxicity of fusaric acid and analogs to cotton.</title>
        <authorList>
            <person name="Stipanovic R.D."/>
            <person name="Puckhaber L.S."/>
            <person name="Liu J."/>
            <person name="Bell A.A."/>
        </authorList>
    </citation>
    <scope>BIOTECHNOLOGY</scope>
</reference>
<reference key="7">
    <citation type="journal article" date="2012" name="Planta Med.">
        <title>In vitro acanthamoebicidal activity of fusaric acid and dehydrofusaric acid from an endophytic fungus Fusarium sp. Tlau3.</title>
        <authorList>
            <person name="Boonman N."/>
            <person name="Prachya S."/>
            <person name="Boonmee A."/>
            <person name="Kittakoop P."/>
            <person name="Wiyakrutta S."/>
            <person name="Sriubolmas N."/>
            <person name="Warit S."/>
            <person name="Dharmkrong-At Chusattayanond A."/>
        </authorList>
    </citation>
    <scope>BIOTECHNOLOGY</scope>
</reference>
<reference key="8">
    <citation type="journal article" date="2013" name="Planta">
        <title>Fusaric acid induction of programmed cell death modulated through nitric oxide signalling in tobacco suspension cells.</title>
        <authorList>
            <person name="Jiao J."/>
            <person name="Zhou B."/>
            <person name="Zhu X."/>
            <person name="Gao Z."/>
            <person name="Liang Y."/>
        </authorList>
    </citation>
    <scope>BIOTECHNOLOGY</scope>
</reference>
<reference key="9">
    <citation type="journal article" date="2013" name="PLoS ONE">
        <title>Contamination of bananas with beauvericin and fusaric acid produced by Fusarium oxysporum f. sp. cubense.</title>
        <authorList>
            <person name="Li C."/>
            <person name="Zuo C."/>
            <person name="Deng G."/>
            <person name="Kuang R."/>
            <person name="Yang Q."/>
            <person name="Hu C."/>
            <person name="Sheng O."/>
            <person name="Zhang S."/>
            <person name="Ma L."/>
            <person name="Wei Y."/>
            <person name="Yang J."/>
            <person name="Liu S."/>
            <person name="Biswas M.K."/>
            <person name="Viljoen A."/>
            <person name="Yi G."/>
        </authorList>
    </citation>
    <scope>BIOTECHNOLOGY</scope>
</reference>
<reference key="10">
    <citation type="journal article" date="2015" name="Mol. Plant Microbe Interact.">
        <title>Identification of a 12-gene fusaric acid biosynthetic gene cluster in Fusarium species through comparative and functional genomics.</title>
        <authorList>
            <person name="Brown D.W."/>
            <person name="Lee S.H."/>
            <person name="Kim L.H."/>
            <person name="Ryu J.G."/>
            <person name="Lee S."/>
            <person name="Seo Y."/>
            <person name="Kim Y.H."/>
            <person name="Busman M."/>
            <person name="Yun S.H."/>
            <person name="Proctor R.H."/>
            <person name="Lee T."/>
        </authorList>
    </citation>
    <scope>FUNCTION</scope>
    <scope>DISRUPTION PHENOTYPE</scope>
</reference>
<gene>
    <name evidence="11" type="primary">FUB10</name>
    <name type="ORF">FOXG_15237</name>
</gene>
<accession>A0A0D2YFZ9</accession>
<sequence>MAGDFSNRAPWKRSACDRCRAQKLRCHRDSGHSTDACLRCLKSGIECVTSKARPTGRPPSRQVQPTVSVEQGDTSSSSHTTDSSPSAGGTDINSMMNFEYDLSLDNILDSIGMQHSDFIVNDNILVDISPLSSQSTSQHSVAQAQTVDPSTIQSTTSYQFNSLPSTSSMDSALPIRSDHVELLLSRLHSKLSAQLYSIRSSPWDVKGTLNLSLAHQGIGQDFENCESHPLVQVSQACTELEKLLSGLRAPASAEHTPSSFSYTPAVPPRLRTTQLLIALSCYIQIVSIYGIIFSKVFDYLLSTSKTSIGSYQSSPLTLYIGGLPIPPNETLSGNLLVHLIEHQLHQIEQLMGLPEHYRVSSRAKDTKDGELGLFGSQHSQSLLNAAIQLGEDRDGNHDDIRCVRALKVVMRQIKDF</sequence>
<keyword id="KW-0539">Nucleus</keyword>
<evidence type="ECO:0000255" key="1">
    <source>
        <dbReference type="PROSITE-ProRule" id="PRU00227"/>
    </source>
</evidence>
<evidence type="ECO:0000256" key="2">
    <source>
        <dbReference type="SAM" id="MobiDB-lite"/>
    </source>
</evidence>
<evidence type="ECO:0000269" key="3">
    <source>
    </source>
</evidence>
<evidence type="ECO:0000269" key="4">
    <source>
    </source>
</evidence>
<evidence type="ECO:0000269" key="5">
    <source>
    </source>
</evidence>
<evidence type="ECO:0000269" key="6">
    <source>
    </source>
</evidence>
<evidence type="ECO:0000269" key="7">
    <source>
    </source>
</evidence>
<evidence type="ECO:0000269" key="8">
    <source>
    </source>
</evidence>
<evidence type="ECO:0000269" key="9">
    <source>
    </source>
</evidence>
<evidence type="ECO:0000269" key="10">
    <source>
    </source>
</evidence>
<evidence type="ECO:0000303" key="11">
    <source>
    </source>
</evidence>
<evidence type="ECO:0000305" key="12">
    <source>
    </source>
</evidence>
<protein>
    <recommendedName>
        <fullName evidence="11">Fusaric acid cluster transcription factor FUB10</fullName>
    </recommendedName>
    <alternativeName>
        <fullName evidence="11">Fusaric acid biosynthesis protein 10</fullName>
    </alternativeName>
</protein>
<organism>
    <name type="scientific">Fusarium oxysporum f. sp. lycopersici (strain 4287 / CBS 123668 / FGSC 9935 / NRRL 34936)</name>
    <name type="common">Fusarium vascular wilt of tomato</name>
    <dbReference type="NCBI Taxonomy" id="426428"/>
    <lineage>
        <taxon>Eukaryota</taxon>
        <taxon>Fungi</taxon>
        <taxon>Dikarya</taxon>
        <taxon>Ascomycota</taxon>
        <taxon>Pezizomycotina</taxon>
        <taxon>Sordariomycetes</taxon>
        <taxon>Hypocreomycetidae</taxon>
        <taxon>Hypocreales</taxon>
        <taxon>Nectriaceae</taxon>
        <taxon>Fusarium</taxon>
        <taxon>Fusarium oxysporum species complex</taxon>
    </lineage>
</organism>